<evidence type="ECO:0000250" key="1"/>
<evidence type="ECO:0000250" key="2">
    <source>
        <dbReference type="UniProtKB" id="Q8VCT9"/>
    </source>
</evidence>
<evidence type="ECO:0000250" key="3">
    <source>
        <dbReference type="UniProtKB" id="Q96S53"/>
    </source>
</evidence>
<evidence type="ECO:0000255" key="4">
    <source>
        <dbReference type="PROSITE-ProRule" id="PRU00159"/>
    </source>
</evidence>
<evidence type="ECO:0000255" key="5">
    <source>
        <dbReference type="PROSITE-ProRule" id="PRU10028"/>
    </source>
</evidence>
<evidence type="ECO:0000256" key="6">
    <source>
        <dbReference type="SAM" id="MobiDB-lite"/>
    </source>
</evidence>
<evidence type="ECO:0000305" key="7"/>
<reference key="1">
    <citation type="journal article" date="2001" name="J. Biol. Chem.">
        <title>Cofilin phosphorylation and actin reorganization activities of testicular protein kinase 2 and its predominant expression in testicular Sertoli cells.</title>
        <authorList>
            <person name="Toshima J."/>
            <person name="Toshima J.Y."/>
            <person name="Takeuchi K."/>
            <person name="Mori R."/>
            <person name="Mizuno K."/>
        </authorList>
    </citation>
    <scope>NUCLEOTIDE SEQUENCE [MRNA]</scope>
</reference>
<reference key="2">
    <citation type="journal article" date="2004" name="Genome Res.">
        <title>The status, quality, and expansion of the NIH full-length cDNA project: the Mammalian Gene Collection (MGC).</title>
        <authorList>
            <consortium name="The MGC Project Team"/>
        </authorList>
    </citation>
    <scope>NUCLEOTIDE SEQUENCE [LARGE SCALE MRNA]</scope>
    <source>
        <tissue>Testis</tissue>
    </source>
</reference>
<keyword id="KW-0067">ATP-binding</keyword>
<keyword id="KW-0418">Kinase</keyword>
<keyword id="KW-0460">Magnesium</keyword>
<keyword id="KW-0464">Manganese</keyword>
<keyword id="KW-0479">Metal-binding</keyword>
<keyword id="KW-0547">Nucleotide-binding</keyword>
<keyword id="KW-0539">Nucleus</keyword>
<keyword id="KW-0597">Phosphoprotein</keyword>
<keyword id="KW-1185">Reference proteome</keyword>
<keyword id="KW-0723">Serine/threonine-protein kinase</keyword>
<keyword id="KW-0808">Transferase</keyword>
<keyword id="KW-0829">Tyrosine-protein kinase</keyword>
<protein>
    <recommendedName>
        <fullName>Dual specificity testis-specific protein kinase 2</fullName>
        <ecNumber>2.7.12.1</ecNumber>
    </recommendedName>
    <alternativeName>
        <fullName>Testicular protein kinase 2</fullName>
    </alternativeName>
</protein>
<sequence>MDRSKRNSIAGFPPRVERLEEFEGGGGGDGNTVQVGRVSSSSYRAIISAFSRLTSLDDFTREKIGSGFFSEVFKVRHRASGQVMALKMNTLSSNRANLLKEMQLMNRLSHPNILRFMGVCVHQGQLHALTEYINSGNLEQLLDSNLYLPWTVRVKLAYDIAVGLSYLHFKGIFHRDLTSKNCLIKRDENGYSAVVADFGLAEKIPDASIGSEKLAVVGSPFWMAPEVLRDEPYNEKADVFSYGIILCEIIARIQADPDYLPRTENFGLDYDAFQHMVGDCPSDFLQLTFNCCNMDPKLRPSFEEIGKTLEEIMSRLQEEELERDRKLQPTAKGLLEKVPGGKRLSSLDDKIPHKSPRPRRTIWLSRSQSDIFSRKPPRTVNVLDPYYQPRDGATHTPKVNPFSARQDLKGGKVKFFDLPSKSVISLVFDLDAPGPGTVSLADCQEPLAPSSRRWRSLPGSPEFLHQACPFVGCEESLSDGPPPRLSSLKYRVREIPPFRTSALSATSAHEAMDCSNPQEENGFVPRPKGTSPCSGAASEEMEVEEERPRRAPVHFSISGISLQTQGEQDG</sequence>
<feature type="chain" id="PRO_0000086751" description="Dual specificity testis-specific protein kinase 2">
    <location>
        <begin position="1"/>
        <end position="570"/>
    </location>
</feature>
<feature type="domain" description="Protein kinase" evidence="4">
    <location>
        <begin position="58"/>
        <end position="313"/>
    </location>
</feature>
<feature type="region of interest" description="Disordered" evidence="6">
    <location>
        <begin position="513"/>
        <end position="570"/>
    </location>
</feature>
<feature type="compositionally biased region" description="Polar residues" evidence="6">
    <location>
        <begin position="558"/>
        <end position="570"/>
    </location>
</feature>
<feature type="active site" description="Proton acceptor" evidence="4 5">
    <location>
        <position position="176"/>
    </location>
</feature>
<feature type="binding site" evidence="4">
    <location>
        <begin position="64"/>
        <end position="72"/>
    </location>
    <ligand>
        <name>ATP</name>
        <dbReference type="ChEBI" id="CHEBI:30616"/>
    </ligand>
</feature>
<feature type="binding site" evidence="4">
    <location>
        <position position="87"/>
    </location>
    <ligand>
        <name>ATP</name>
        <dbReference type="ChEBI" id="CHEBI:30616"/>
    </ligand>
</feature>
<feature type="modified residue" description="Phosphoserine; by autocatalysis" evidence="1">
    <location>
        <position position="219"/>
    </location>
</feature>
<feature type="modified residue" description="Phosphoserine" evidence="3">
    <location>
        <position position="369"/>
    </location>
</feature>
<feature type="modified residue" description="Phosphoserine" evidence="3">
    <location>
        <position position="456"/>
    </location>
</feature>
<feature type="modified residue" description="Phosphoserine" evidence="2">
    <location>
        <position position="460"/>
    </location>
</feature>
<accession>Q924U5</accession>
<accession>A1A5M5</accession>
<organism>
    <name type="scientific">Rattus norvegicus</name>
    <name type="common">Rat</name>
    <dbReference type="NCBI Taxonomy" id="10116"/>
    <lineage>
        <taxon>Eukaryota</taxon>
        <taxon>Metazoa</taxon>
        <taxon>Chordata</taxon>
        <taxon>Craniata</taxon>
        <taxon>Vertebrata</taxon>
        <taxon>Euteleostomi</taxon>
        <taxon>Mammalia</taxon>
        <taxon>Eutheria</taxon>
        <taxon>Euarchontoglires</taxon>
        <taxon>Glires</taxon>
        <taxon>Rodentia</taxon>
        <taxon>Myomorpha</taxon>
        <taxon>Muroidea</taxon>
        <taxon>Muridae</taxon>
        <taxon>Murinae</taxon>
        <taxon>Rattus</taxon>
    </lineage>
</organism>
<gene>
    <name type="primary">Tesk2</name>
</gene>
<dbReference type="EC" id="2.7.12.1"/>
<dbReference type="EMBL" id="AB049402">
    <property type="protein sequence ID" value="BAB62908.1"/>
    <property type="molecule type" value="mRNA"/>
</dbReference>
<dbReference type="EMBL" id="BC128727">
    <property type="protein sequence ID" value="AAI28728.1"/>
    <property type="molecule type" value="mRNA"/>
</dbReference>
<dbReference type="RefSeq" id="NP_596887.1">
    <property type="nucleotide sequence ID" value="NM_133396.2"/>
</dbReference>
<dbReference type="RefSeq" id="XP_006238690.1">
    <property type="nucleotide sequence ID" value="XM_006238628.3"/>
</dbReference>
<dbReference type="RefSeq" id="XP_038965137.1">
    <property type="nucleotide sequence ID" value="XM_039109209.2"/>
</dbReference>
<dbReference type="RefSeq" id="XP_038965138.1">
    <property type="nucleotide sequence ID" value="XM_039109210.2"/>
</dbReference>
<dbReference type="SMR" id="Q924U5"/>
<dbReference type="FunCoup" id="Q924U5">
    <property type="interactions" value="320"/>
</dbReference>
<dbReference type="STRING" id="10116.ENSRNOP00000023416"/>
<dbReference type="iPTMnet" id="Q924U5"/>
<dbReference type="PhosphoSitePlus" id="Q924U5"/>
<dbReference type="PaxDb" id="10116-ENSRNOP00000023416"/>
<dbReference type="Ensembl" id="ENSRNOT00000023416.5">
    <property type="protein sequence ID" value="ENSRNOP00000023416.3"/>
    <property type="gene ID" value="ENSRNOG00000017282.7"/>
</dbReference>
<dbReference type="GeneID" id="170908"/>
<dbReference type="KEGG" id="rno:170908"/>
<dbReference type="UCSC" id="RGD:619984">
    <property type="organism name" value="rat"/>
</dbReference>
<dbReference type="AGR" id="RGD:619984"/>
<dbReference type="CTD" id="10420"/>
<dbReference type="RGD" id="619984">
    <property type="gene designation" value="Tesk2"/>
</dbReference>
<dbReference type="eggNOG" id="ENOG502QTCP">
    <property type="taxonomic scope" value="Eukaryota"/>
</dbReference>
<dbReference type="GeneTree" id="ENSGT00940000158765"/>
<dbReference type="HOGENOM" id="CLU_018577_1_0_1"/>
<dbReference type="InParanoid" id="Q924U5"/>
<dbReference type="OMA" id="REAWPFR"/>
<dbReference type="OrthoDB" id="20134at2759"/>
<dbReference type="PhylomeDB" id="Q924U5"/>
<dbReference type="TreeFam" id="TF318014"/>
<dbReference type="BRENDA" id="2.7.10.2">
    <property type="organism ID" value="5301"/>
</dbReference>
<dbReference type="PRO" id="PR:Q924U5"/>
<dbReference type="Proteomes" id="UP000002494">
    <property type="component" value="Chromosome 5"/>
</dbReference>
<dbReference type="Bgee" id="ENSRNOG00000017282">
    <property type="expression patterns" value="Expressed in jejunum and 19 other cell types or tissues"/>
</dbReference>
<dbReference type="GO" id="GO:0005737">
    <property type="term" value="C:cytoplasm"/>
    <property type="evidence" value="ECO:0000318"/>
    <property type="project" value="GO_Central"/>
</dbReference>
<dbReference type="GO" id="GO:0016604">
    <property type="term" value="C:nuclear body"/>
    <property type="evidence" value="ECO:0007669"/>
    <property type="project" value="Ensembl"/>
</dbReference>
<dbReference type="GO" id="GO:0005634">
    <property type="term" value="C:nucleus"/>
    <property type="evidence" value="ECO:0000314"/>
    <property type="project" value="UniProtKB"/>
</dbReference>
<dbReference type="GO" id="GO:0005524">
    <property type="term" value="F:ATP binding"/>
    <property type="evidence" value="ECO:0007669"/>
    <property type="project" value="UniProtKB-KW"/>
</dbReference>
<dbReference type="GO" id="GO:0046872">
    <property type="term" value="F:metal ion binding"/>
    <property type="evidence" value="ECO:0007669"/>
    <property type="project" value="UniProtKB-KW"/>
</dbReference>
<dbReference type="GO" id="GO:0106310">
    <property type="term" value="F:protein serine kinase activity"/>
    <property type="evidence" value="ECO:0007669"/>
    <property type="project" value="RHEA"/>
</dbReference>
<dbReference type="GO" id="GO:0004674">
    <property type="term" value="F:protein serine/threonine kinase activity"/>
    <property type="evidence" value="ECO:0000314"/>
    <property type="project" value="UniProtKB"/>
</dbReference>
<dbReference type="GO" id="GO:0004712">
    <property type="term" value="F:protein serine/threonine/tyrosine kinase activity"/>
    <property type="evidence" value="ECO:0007669"/>
    <property type="project" value="UniProtKB-EC"/>
</dbReference>
<dbReference type="GO" id="GO:0004713">
    <property type="term" value="F:protein tyrosine kinase activity"/>
    <property type="evidence" value="ECO:0007669"/>
    <property type="project" value="UniProtKB-KW"/>
</dbReference>
<dbReference type="GO" id="GO:0030036">
    <property type="term" value="P:actin cytoskeleton organization"/>
    <property type="evidence" value="ECO:0000315"/>
    <property type="project" value="UniProtKB"/>
</dbReference>
<dbReference type="GO" id="GO:0006915">
    <property type="term" value="P:apoptotic process"/>
    <property type="evidence" value="ECO:0000303"/>
    <property type="project" value="UniProtKB"/>
</dbReference>
<dbReference type="GO" id="GO:0048041">
    <property type="term" value="P:focal adhesion assembly"/>
    <property type="evidence" value="ECO:0000315"/>
    <property type="project" value="UniProtKB"/>
</dbReference>
<dbReference type="GO" id="GO:0035556">
    <property type="term" value="P:intracellular signal transduction"/>
    <property type="evidence" value="ECO:0000303"/>
    <property type="project" value="UniProtKB"/>
</dbReference>
<dbReference type="GO" id="GO:0006468">
    <property type="term" value="P:protein phosphorylation"/>
    <property type="evidence" value="ECO:0000314"/>
    <property type="project" value="UniProtKB"/>
</dbReference>
<dbReference type="GO" id="GO:0007283">
    <property type="term" value="P:spermatogenesis"/>
    <property type="evidence" value="ECO:0000270"/>
    <property type="project" value="UniProtKB"/>
</dbReference>
<dbReference type="CDD" id="cd14155">
    <property type="entry name" value="PKc_TESK"/>
    <property type="match status" value="1"/>
</dbReference>
<dbReference type="FunFam" id="1.10.510.10:FF:000202">
    <property type="entry name" value="Dual specificity testis-specific protein kinase 2"/>
    <property type="match status" value="1"/>
</dbReference>
<dbReference type="FunFam" id="3.30.200.20:FF:000134">
    <property type="entry name" value="Dual specificity testis-specific protein kinase 2"/>
    <property type="match status" value="1"/>
</dbReference>
<dbReference type="Gene3D" id="3.30.200.20">
    <property type="entry name" value="Phosphorylase Kinase, domain 1"/>
    <property type="match status" value="1"/>
</dbReference>
<dbReference type="Gene3D" id="1.10.510.10">
    <property type="entry name" value="Transferase(Phosphotransferase) domain 1"/>
    <property type="match status" value="1"/>
</dbReference>
<dbReference type="InterPro" id="IPR050940">
    <property type="entry name" value="Actin_reg-Ser/Thr_kinase"/>
</dbReference>
<dbReference type="InterPro" id="IPR011009">
    <property type="entry name" value="Kinase-like_dom_sf"/>
</dbReference>
<dbReference type="InterPro" id="IPR000719">
    <property type="entry name" value="Prot_kinase_dom"/>
</dbReference>
<dbReference type="InterPro" id="IPR017441">
    <property type="entry name" value="Protein_kinase_ATP_BS"/>
</dbReference>
<dbReference type="InterPro" id="IPR001245">
    <property type="entry name" value="Ser-Thr/Tyr_kinase_cat_dom"/>
</dbReference>
<dbReference type="InterPro" id="IPR008266">
    <property type="entry name" value="Tyr_kinase_AS"/>
</dbReference>
<dbReference type="PANTHER" id="PTHR46485:SF6">
    <property type="entry name" value="DUAL SPECIFICITY TESTIS-SPECIFIC PROTEIN KINASE 2"/>
    <property type="match status" value="1"/>
</dbReference>
<dbReference type="PANTHER" id="PTHR46485">
    <property type="entry name" value="LIM DOMAIN KINASE 1"/>
    <property type="match status" value="1"/>
</dbReference>
<dbReference type="Pfam" id="PF07714">
    <property type="entry name" value="PK_Tyr_Ser-Thr"/>
    <property type="match status" value="1"/>
</dbReference>
<dbReference type="PRINTS" id="PR00109">
    <property type="entry name" value="TYRKINASE"/>
</dbReference>
<dbReference type="SUPFAM" id="SSF56112">
    <property type="entry name" value="Protein kinase-like (PK-like)"/>
    <property type="match status" value="1"/>
</dbReference>
<dbReference type="PROSITE" id="PS00107">
    <property type="entry name" value="PROTEIN_KINASE_ATP"/>
    <property type="match status" value="1"/>
</dbReference>
<dbReference type="PROSITE" id="PS50011">
    <property type="entry name" value="PROTEIN_KINASE_DOM"/>
    <property type="match status" value="1"/>
</dbReference>
<dbReference type="PROSITE" id="PS00109">
    <property type="entry name" value="PROTEIN_KINASE_TYR"/>
    <property type="match status" value="1"/>
</dbReference>
<name>TESK2_RAT</name>
<proteinExistence type="evidence at transcript level"/>
<comment type="function">
    <text evidence="1">Dual specificity protein kinase activity catalyzing autophosphorylation and phosphorylation of exogenous substrates on both serine/threonine and tyrosine residues. Phosphorylates cofilin at 'Ser-3'. May play an important role in spermatogenesis (By similarity).</text>
</comment>
<comment type="catalytic activity">
    <reaction>
        <text>L-seryl-[protein] + ATP = O-phospho-L-seryl-[protein] + ADP + H(+)</text>
        <dbReference type="Rhea" id="RHEA:17989"/>
        <dbReference type="Rhea" id="RHEA-COMP:9863"/>
        <dbReference type="Rhea" id="RHEA-COMP:11604"/>
        <dbReference type="ChEBI" id="CHEBI:15378"/>
        <dbReference type="ChEBI" id="CHEBI:29999"/>
        <dbReference type="ChEBI" id="CHEBI:30616"/>
        <dbReference type="ChEBI" id="CHEBI:83421"/>
        <dbReference type="ChEBI" id="CHEBI:456216"/>
        <dbReference type="EC" id="2.7.12.1"/>
    </reaction>
</comment>
<comment type="catalytic activity">
    <reaction>
        <text>L-threonyl-[protein] + ATP = O-phospho-L-threonyl-[protein] + ADP + H(+)</text>
        <dbReference type="Rhea" id="RHEA:46608"/>
        <dbReference type="Rhea" id="RHEA-COMP:11060"/>
        <dbReference type="Rhea" id="RHEA-COMP:11605"/>
        <dbReference type="ChEBI" id="CHEBI:15378"/>
        <dbReference type="ChEBI" id="CHEBI:30013"/>
        <dbReference type="ChEBI" id="CHEBI:30616"/>
        <dbReference type="ChEBI" id="CHEBI:61977"/>
        <dbReference type="ChEBI" id="CHEBI:456216"/>
        <dbReference type="EC" id="2.7.12.1"/>
    </reaction>
</comment>
<comment type="catalytic activity">
    <reaction>
        <text>L-tyrosyl-[protein] + ATP = O-phospho-L-tyrosyl-[protein] + ADP + H(+)</text>
        <dbReference type="Rhea" id="RHEA:10596"/>
        <dbReference type="Rhea" id="RHEA-COMP:10136"/>
        <dbReference type="Rhea" id="RHEA-COMP:20101"/>
        <dbReference type="ChEBI" id="CHEBI:15378"/>
        <dbReference type="ChEBI" id="CHEBI:30616"/>
        <dbReference type="ChEBI" id="CHEBI:46858"/>
        <dbReference type="ChEBI" id="CHEBI:61978"/>
        <dbReference type="ChEBI" id="CHEBI:456216"/>
        <dbReference type="EC" id="2.7.12.1"/>
    </reaction>
</comment>
<comment type="cofactor">
    <cofactor evidence="1">
        <name>Mg(2+)</name>
        <dbReference type="ChEBI" id="CHEBI:18420"/>
    </cofactor>
</comment>
<comment type="cofactor">
    <cofactor evidence="1">
        <name>Mn(2+)</name>
        <dbReference type="ChEBI" id="CHEBI:29035"/>
    </cofactor>
</comment>
<comment type="activity regulation">
    <text evidence="1">Activated by autophosphorylation on Ser-219.</text>
</comment>
<comment type="subcellular location">
    <subcellularLocation>
        <location evidence="1">Nucleus</location>
    </subcellularLocation>
</comment>
<comment type="tissue specificity">
    <text>Predominantly expressed in testis and prostate. Found predominantly in non-germinal Sertoli cells.</text>
</comment>
<comment type="similarity">
    <text evidence="7">Belongs to the protein kinase superfamily. TKL Ser/Thr protein kinase family.</text>
</comment>